<proteinExistence type="inferred from homology"/>
<organism>
    <name type="scientific">Acetivibrio thermocellus (strain ATCC 27405 / DSM 1237 / JCM 9322 / NBRC 103400 / NCIMB 10682 / NRRL B-4536 / VPI 7372)</name>
    <name type="common">Clostridium thermocellum</name>
    <dbReference type="NCBI Taxonomy" id="203119"/>
    <lineage>
        <taxon>Bacteria</taxon>
        <taxon>Bacillati</taxon>
        <taxon>Bacillota</taxon>
        <taxon>Clostridia</taxon>
        <taxon>Eubacteriales</taxon>
        <taxon>Oscillospiraceae</taxon>
        <taxon>Acetivibrio</taxon>
    </lineage>
</organism>
<reference key="1">
    <citation type="submission" date="2007-02" db="EMBL/GenBank/DDBJ databases">
        <title>Complete sequence of Clostridium thermocellum ATCC 27405.</title>
        <authorList>
            <consortium name="US DOE Joint Genome Institute"/>
            <person name="Copeland A."/>
            <person name="Lucas S."/>
            <person name="Lapidus A."/>
            <person name="Barry K."/>
            <person name="Detter J.C."/>
            <person name="Glavina del Rio T."/>
            <person name="Hammon N."/>
            <person name="Israni S."/>
            <person name="Dalin E."/>
            <person name="Tice H."/>
            <person name="Pitluck S."/>
            <person name="Chertkov O."/>
            <person name="Brettin T."/>
            <person name="Bruce D."/>
            <person name="Han C."/>
            <person name="Tapia R."/>
            <person name="Gilna P."/>
            <person name="Schmutz J."/>
            <person name="Larimer F."/>
            <person name="Land M."/>
            <person name="Hauser L."/>
            <person name="Kyrpides N."/>
            <person name="Mikhailova N."/>
            <person name="Wu J.H.D."/>
            <person name="Newcomb M."/>
            <person name="Richardson P."/>
        </authorList>
    </citation>
    <scope>NUCLEOTIDE SEQUENCE [LARGE SCALE GENOMIC DNA]</scope>
    <source>
        <strain>ATCC 27405 / DSM 1237 / JCM 9322 / NBRC 103400 / NCIMB 10682 / NRRL B-4536 / VPI 7372</strain>
    </source>
</reference>
<comment type="function">
    <text evidence="1">Might take part in the signal recognition particle (SRP) pathway. This is inferred from the conservation of its genetic proximity to ftsY/ffh. May be a regulatory protein.</text>
</comment>
<comment type="similarity">
    <text evidence="1">Belongs to the UPF0122 family.</text>
</comment>
<sequence length="117" mass="13717">MDKVYEAALLLDFYGQLLTKRQFEILDLYLNNDYSLGEIAEHLNISRQGVYDNIKRGRAMLDRMEEKLGLVHKFLQQKNRALEILKDIKSIDISSMSVEDAKILKRVEERIEEIVES</sequence>
<keyword id="KW-1185">Reference proteome</keyword>
<feature type="chain" id="PRO_1000059000" description="UPF0122 protein Cthe_0771">
    <location>
        <begin position="1"/>
        <end position="117"/>
    </location>
</feature>
<dbReference type="EMBL" id="CP000568">
    <property type="protein sequence ID" value="ABN52006.1"/>
    <property type="molecule type" value="Genomic_DNA"/>
</dbReference>
<dbReference type="SMR" id="A3DDH7"/>
<dbReference type="STRING" id="203119.Cthe_0771"/>
<dbReference type="GeneID" id="35805810"/>
<dbReference type="KEGG" id="cth:Cthe_0771"/>
<dbReference type="eggNOG" id="COG2739">
    <property type="taxonomic scope" value="Bacteria"/>
</dbReference>
<dbReference type="HOGENOM" id="CLU_129218_0_1_9"/>
<dbReference type="OrthoDB" id="6392at2"/>
<dbReference type="Proteomes" id="UP000002145">
    <property type="component" value="Chromosome"/>
</dbReference>
<dbReference type="Gene3D" id="1.10.10.10">
    <property type="entry name" value="Winged helix-like DNA-binding domain superfamily/Winged helix DNA-binding domain"/>
    <property type="match status" value="1"/>
</dbReference>
<dbReference type="HAMAP" id="MF_00245">
    <property type="entry name" value="UPF0122"/>
    <property type="match status" value="1"/>
</dbReference>
<dbReference type="InterPro" id="IPR013324">
    <property type="entry name" value="RNA_pol_sigma_r3/r4-like"/>
</dbReference>
<dbReference type="InterPro" id="IPR007394">
    <property type="entry name" value="UPF0122"/>
</dbReference>
<dbReference type="InterPro" id="IPR054831">
    <property type="entry name" value="UPF0122_fam_protein"/>
</dbReference>
<dbReference type="InterPro" id="IPR036388">
    <property type="entry name" value="WH-like_DNA-bd_sf"/>
</dbReference>
<dbReference type="NCBIfam" id="NF045758">
    <property type="entry name" value="YlxM"/>
    <property type="match status" value="1"/>
</dbReference>
<dbReference type="PANTHER" id="PTHR40083">
    <property type="entry name" value="UPF0122 PROTEIN CBO2450/CLC_2298"/>
    <property type="match status" value="1"/>
</dbReference>
<dbReference type="PANTHER" id="PTHR40083:SF1">
    <property type="entry name" value="UPF0122 PROTEIN YLXM"/>
    <property type="match status" value="1"/>
</dbReference>
<dbReference type="Pfam" id="PF04297">
    <property type="entry name" value="UPF0122"/>
    <property type="match status" value="1"/>
</dbReference>
<dbReference type="SUPFAM" id="SSF88659">
    <property type="entry name" value="Sigma3 and sigma4 domains of RNA polymerase sigma factors"/>
    <property type="match status" value="1"/>
</dbReference>
<gene>
    <name type="ordered locus">Cthe_0771</name>
</gene>
<accession>A3DDH7</accession>
<name>Y771_ACET2</name>
<evidence type="ECO:0000255" key="1">
    <source>
        <dbReference type="HAMAP-Rule" id="MF_00245"/>
    </source>
</evidence>
<protein>
    <recommendedName>
        <fullName evidence="1">UPF0122 protein Cthe_0771</fullName>
    </recommendedName>
</protein>